<reference evidence="9" key="1">
    <citation type="journal article" date="2004" name="DNA Seq.">
        <title>The Selenophosphate synthetase gene from Leishmania major.</title>
        <authorList>
            <person name="Jayakumar P.C."/>
            <person name="Musande V.V."/>
            <person name="Shouche Y.S."/>
            <person name="Patole M.S."/>
        </authorList>
    </citation>
    <scope>NUCLEOTIDE SEQUENCE [MRNA]</scope>
    <scope>DEVELOPMENTAL STAGE</scope>
</reference>
<reference evidence="11" key="2">
    <citation type="journal article" date="2005" name="Science">
        <title>The genome of the kinetoplastid parasite, Leishmania major.</title>
        <authorList>
            <person name="Ivens A.C."/>
            <person name="Peacock C.S."/>
            <person name="Worthey E.A."/>
            <person name="Murphy L."/>
            <person name="Aggarwal G."/>
            <person name="Berriman M."/>
            <person name="Sisk E."/>
            <person name="Rajandream M.A."/>
            <person name="Adlem E."/>
            <person name="Aert R."/>
            <person name="Anupama A."/>
            <person name="Apostolou Z."/>
            <person name="Attipoe P."/>
            <person name="Bason N."/>
            <person name="Bauser C."/>
            <person name="Beck A."/>
            <person name="Beverley S.M."/>
            <person name="Bianchettin G."/>
            <person name="Borzym K."/>
            <person name="Bothe G."/>
            <person name="Bruschi C.V."/>
            <person name="Collins M."/>
            <person name="Cadag E."/>
            <person name="Ciarloni L."/>
            <person name="Clayton C."/>
            <person name="Coulson R.M.R."/>
            <person name="Cronin A."/>
            <person name="Cruz A.K."/>
            <person name="Davies R.M."/>
            <person name="De Gaudenzi J."/>
            <person name="Dobson D.E."/>
            <person name="Duesterhoeft A."/>
            <person name="Fazelina G."/>
            <person name="Fosker N."/>
            <person name="Frasch A.C."/>
            <person name="Fraser A."/>
            <person name="Fuchs M."/>
            <person name="Gabel C."/>
            <person name="Goble A."/>
            <person name="Goffeau A."/>
            <person name="Harris D."/>
            <person name="Hertz-Fowler C."/>
            <person name="Hilbert H."/>
            <person name="Horn D."/>
            <person name="Huang Y."/>
            <person name="Klages S."/>
            <person name="Knights A."/>
            <person name="Kube M."/>
            <person name="Larke N."/>
            <person name="Litvin L."/>
            <person name="Lord A."/>
            <person name="Louie T."/>
            <person name="Marra M."/>
            <person name="Masuy D."/>
            <person name="Matthews K."/>
            <person name="Michaeli S."/>
            <person name="Mottram J.C."/>
            <person name="Mueller-Auer S."/>
            <person name="Munden H."/>
            <person name="Nelson S."/>
            <person name="Norbertczak H."/>
            <person name="Oliver K."/>
            <person name="O'neil S."/>
            <person name="Pentony M."/>
            <person name="Pohl T.M."/>
            <person name="Price C."/>
            <person name="Purnelle B."/>
            <person name="Quail M.A."/>
            <person name="Rabbinowitsch E."/>
            <person name="Reinhardt R."/>
            <person name="Rieger M."/>
            <person name="Rinta J."/>
            <person name="Robben J."/>
            <person name="Robertson L."/>
            <person name="Ruiz J.C."/>
            <person name="Rutter S."/>
            <person name="Saunders D."/>
            <person name="Schaefer M."/>
            <person name="Schein J."/>
            <person name="Schwartz D.C."/>
            <person name="Seeger K."/>
            <person name="Seyler A."/>
            <person name="Sharp S."/>
            <person name="Shin H."/>
            <person name="Sivam D."/>
            <person name="Squares R."/>
            <person name="Squares S."/>
            <person name="Tosato V."/>
            <person name="Vogt C."/>
            <person name="Volckaert G."/>
            <person name="Wambutt R."/>
            <person name="Warren T."/>
            <person name="Wedler H."/>
            <person name="Woodward J."/>
            <person name="Zhou S."/>
            <person name="Zimmermann W."/>
            <person name="Smith D.F."/>
            <person name="Blackwell J.M."/>
            <person name="Stuart K.D."/>
            <person name="Barrell B.G."/>
            <person name="Myler P.J."/>
        </authorList>
    </citation>
    <scope>NUCLEOTIDE SEQUENCE [LARGE SCALE GENOMIC DNA]</scope>
    <source>
        <strain evidence="11">MHOM/IL/81/Friedlin</strain>
    </source>
</reference>
<reference evidence="11" key="3">
    <citation type="journal article" date="2011" name="Genome Res.">
        <title>Chromosome and gene copy number variation allow major structural change between species and strains of Leishmania.</title>
        <authorList>
            <person name="Rogers M.B."/>
            <person name="Hilley J.D."/>
            <person name="Dickens N.J."/>
            <person name="Wilkes J."/>
            <person name="Bates P.A."/>
            <person name="Depledge D.P."/>
            <person name="Harris D."/>
            <person name="Her Y."/>
            <person name="Herzyk P."/>
            <person name="Imamura H."/>
            <person name="Otto T.D."/>
            <person name="Sanders M."/>
            <person name="Seeger K."/>
            <person name="Dujardin J.C."/>
            <person name="Berriman M."/>
            <person name="Smith D.F."/>
            <person name="Hertz-Fowler C."/>
            <person name="Mottram J.C."/>
        </authorList>
    </citation>
    <scope>NUCLEOTIDE SEQUENCE [LARGE SCALE GENOMIC DNA]</scope>
    <source>
        <strain evidence="11">MHOM/IL/81/Friedlin</strain>
    </source>
</reference>
<reference evidence="7" key="4">
    <citation type="journal article" date="2008" name="Mol. Biochem. Parasitol.">
        <title>Selenocysteine incorporation in Kinetoplastid: selenophosphate synthetase (SELD) from Leishmania major and Trypanosoma brucei.</title>
        <authorList>
            <person name="Sculaccio S.A."/>
            <person name="Rodrigues E.M."/>
            <person name="Cordeiro A.T."/>
            <person name="Magalhaes A."/>
            <person name="Braga A.L."/>
            <person name="Alberto E.E."/>
            <person name="Thiemann O.H."/>
        </authorList>
    </citation>
    <scope>FUNCTION</scope>
    <scope>CATALYTIC ACTIVITY</scope>
    <scope>SUBUNIT</scope>
    <scope>ACTIVE SITE</scope>
    <scope>MUTAGENESIS OF CYS-46</scope>
</reference>
<reference evidence="12" key="5">
    <citation type="submission" date="2016-07" db="PDB data bank">
        <title>Crystal Structure of N-terminus truncated selenophosphate synthetase from Leishmania major.</title>
        <authorList>
            <person name="Faim L.M."/>
            <person name="Silva I.R."/>
            <person name="Pereira H.M."/>
            <person name="Dias M.B."/>
            <person name="Silva M.T.A."/>
            <person name="Brandao-Neto J."/>
            <person name="Thiemann O.H."/>
        </authorList>
    </citation>
    <scope>X-RAY CRYSTALLOGRAPHY (1.88 ANGSTROMS)</scope>
</reference>
<name>SPS2_LEIMA</name>
<keyword id="KW-0002">3D-structure</keyword>
<keyword id="KW-0067">ATP-binding</keyword>
<keyword id="KW-0418">Kinase</keyword>
<keyword id="KW-0460">Magnesium</keyword>
<keyword id="KW-0479">Metal-binding</keyword>
<keyword id="KW-0547">Nucleotide-binding</keyword>
<keyword id="KW-1185">Reference proteome</keyword>
<keyword id="KW-0711">Selenium</keyword>
<keyword id="KW-0808">Transferase</keyword>
<accession>Q4Q0M0</accession>
<accession>Q8MXD3</accession>
<comment type="function">
    <text evidence="5">Synthesizes selenophosphate from selenide and ATP.</text>
</comment>
<comment type="catalytic activity">
    <reaction evidence="5">
        <text>hydrogenselenide + ATP + H2O = selenophosphate + AMP + phosphate + 2 H(+)</text>
        <dbReference type="Rhea" id="RHEA:18737"/>
        <dbReference type="ChEBI" id="CHEBI:15377"/>
        <dbReference type="ChEBI" id="CHEBI:15378"/>
        <dbReference type="ChEBI" id="CHEBI:16144"/>
        <dbReference type="ChEBI" id="CHEBI:29317"/>
        <dbReference type="ChEBI" id="CHEBI:30616"/>
        <dbReference type="ChEBI" id="CHEBI:43474"/>
        <dbReference type="ChEBI" id="CHEBI:456215"/>
        <dbReference type="EC" id="2.7.9.3"/>
    </reaction>
</comment>
<comment type="cofactor">
    <cofactor evidence="2">
        <name>Mg(2+)</name>
        <dbReference type="ChEBI" id="CHEBI:18420"/>
    </cofactor>
    <text evidence="2">Binds 1 Mg(2+) ion per monomer.</text>
</comment>
<comment type="subunit">
    <text evidence="5">Homodimer.</text>
</comment>
<comment type="developmental stage">
    <text evidence="4">Expressed at the promastigote and amastigote stages.</text>
</comment>
<comment type="similarity">
    <text evidence="7">Belongs to the selenophosphate synthase 1 family. Class I subfamily.</text>
</comment>
<comment type="sequence caution" evidence="7">
    <conflict type="erroneous initiation">
        <sequence resource="EMBL-CDS" id="AAG35734"/>
    </conflict>
    <text>Extended N-terminus.</text>
</comment>
<proteinExistence type="evidence at protein level"/>
<feature type="chain" id="PRO_0000451406" description="Selenide, water dikinase">
    <location>
        <begin position="1"/>
        <end position="398"/>
    </location>
</feature>
<feature type="region of interest" description="Disordered" evidence="3">
    <location>
        <begin position="1"/>
        <end position="21"/>
    </location>
</feature>
<feature type="active site" evidence="8">
    <location>
        <position position="46"/>
    </location>
</feature>
<feature type="binding site" description="in other chain" evidence="2">
    <location>
        <position position="49"/>
    </location>
    <ligand>
        <name>ATP</name>
        <dbReference type="ChEBI" id="CHEBI:30616"/>
        <note>ligand shared between dimeric partners</note>
    </ligand>
</feature>
<feature type="binding site" description="in other chain" evidence="2">
    <location>
        <begin position="72"/>
        <end position="74"/>
    </location>
    <ligand>
        <name>ATP</name>
        <dbReference type="ChEBI" id="CHEBI:30616"/>
        <note>ligand shared between dimeric partners</note>
    </ligand>
</feature>
<feature type="binding site" evidence="2">
    <location>
        <position position="74"/>
    </location>
    <ligand>
        <name>Mg(2+)</name>
        <dbReference type="ChEBI" id="CHEBI:18420"/>
    </ligand>
</feature>
<feature type="binding site" description="in other chain" evidence="2">
    <location>
        <position position="97"/>
    </location>
    <ligand>
        <name>ATP</name>
        <dbReference type="ChEBI" id="CHEBI:30616"/>
        <note>ligand shared between dimeric partners</note>
    </ligand>
</feature>
<feature type="binding site" description="in other chain" evidence="2">
    <location>
        <position position="120"/>
    </location>
    <ligand>
        <name>ATP</name>
        <dbReference type="ChEBI" id="CHEBI:30616"/>
        <note>ligand shared between dimeric partners</note>
    </ligand>
</feature>
<feature type="binding site" evidence="2">
    <location>
        <position position="120"/>
    </location>
    <ligand>
        <name>Mg(2+)</name>
        <dbReference type="ChEBI" id="CHEBI:18420"/>
    </ligand>
</feature>
<feature type="binding site" evidence="2">
    <location>
        <begin position="171"/>
        <end position="174"/>
    </location>
    <ligand>
        <name>ATP</name>
        <dbReference type="ChEBI" id="CHEBI:30616"/>
        <note>ligand shared between dimeric partners</note>
    </ligand>
</feature>
<feature type="binding site" evidence="2">
    <location>
        <position position="278"/>
    </location>
    <ligand>
        <name>Mg(2+)</name>
        <dbReference type="ChEBI" id="CHEBI:18420"/>
    </ligand>
</feature>
<feature type="site" description="Important for catalytic activity" evidence="1">
    <location>
        <position position="49"/>
    </location>
</feature>
<feature type="mutagenesis site" description="Loss of catalytic activity." evidence="5">
    <original>C</original>
    <variation>A</variation>
    <location>
        <position position="46"/>
    </location>
</feature>
<feature type="strand" evidence="13">
    <location>
        <begin position="76"/>
        <end position="83"/>
    </location>
</feature>
<feature type="strand" evidence="13">
    <location>
        <begin position="89"/>
        <end position="99"/>
    </location>
</feature>
<feature type="helix" evidence="13">
    <location>
        <begin position="106"/>
        <end position="122"/>
    </location>
</feature>
<feature type="turn" evidence="13">
    <location>
        <begin position="123"/>
        <end position="125"/>
    </location>
</feature>
<feature type="strand" evidence="13">
    <location>
        <begin position="131"/>
        <end position="142"/>
    </location>
</feature>
<feature type="helix" evidence="13">
    <location>
        <begin position="144"/>
        <end position="164"/>
    </location>
</feature>
<feature type="strand" evidence="13">
    <location>
        <begin position="169"/>
        <end position="179"/>
    </location>
</feature>
<feature type="strand" evidence="13">
    <location>
        <begin position="181"/>
        <end position="191"/>
    </location>
</feature>
<feature type="helix" evidence="13">
    <location>
        <begin position="192"/>
        <end position="194"/>
    </location>
</feature>
<feature type="strand" evidence="13">
    <location>
        <begin position="198"/>
        <end position="200"/>
    </location>
</feature>
<feature type="strand" evidence="13">
    <location>
        <begin position="207"/>
        <end position="212"/>
    </location>
</feature>
<feature type="helix" evidence="13">
    <location>
        <begin position="216"/>
        <end position="227"/>
    </location>
</feature>
<feature type="helix" evidence="13">
    <location>
        <begin position="231"/>
        <end position="236"/>
    </location>
</feature>
<feature type="turn" evidence="13">
    <location>
        <begin position="237"/>
        <end position="240"/>
    </location>
</feature>
<feature type="helix" evidence="13">
    <location>
        <begin position="243"/>
        <end position="258"/>
    </location>
</feature>
<feature type="helix" evidence="13">
    <location>
        <begin position="262"/>
        <end position="267"/>
    </location>
</feature>
<feature type="helix" evidence="13">
    <location>
        <begin position="269"/>
        <end position="271"/>
    </location>
</feature>
<feature type="strand" evidence="13">
    <location>
        <begin position="276"/>
        <end position="278"/>
    </location>
</feature>
<feature type="helix" evidence="13">
    <location>
        <begin position="283"/>
        <end position="294"/>
    </location>
</feature>
<feature type="strand" evidence="13">
    <location>
        <begin position="298"/>
        <end position="300"/>
    </location>
</feature>
<feature type="strand" evidence="13">
    <location>
        <begin position="304"/>
        <end position="313"/>
    </location>
</feature>
<feature type="helix" evidence="13">
    <location>
        <begin position="315"/>
        <end position="323"/>
    </location>
</feature>
<feature type="turn" evidence="13">
    <location>
        <begin position="324"/>
        <end position="328"/>
    </location>
</feature>
<feature type="turn" evidence="13">
    <location>
        <begin position="330"/>
        <end position="333"/>
    </location>
</feature>
<feature type="strand" evidence="13">
    <location>
        <begin position="342"/>
        <end position="348"/>
    </location>
</feature>
<feature type="helix" evidence="13">
    <location>
        <begin position="349"/>
        <end position="362"/>
    </location>
</feature>
<feature type="turn" evidence="13">
    <location>
        <begin position="363"/>
        <end position="365"/>
    </location>
</feature>
<feature type="strand" evidence="13">
    <location>
        <begin position="369"/>
        <end position="376"/>
    </location>
</feature>
<feature type="strand" evidence="13">
    <location>
        <begin position="387"/>
        <end position="397"/>
    </location>
</feature>
<sequence>MSHKRPQSSAGESNGAVDLKTPRFDPVSLGLPAEFQLTDYTRLKGCSCKLPQPKLLALLQELSATPGQKDVGMDCSIVPLHHTNSKGEALFLVSTTDFFFPSVSDPFLQGQIGAANVLSDLYSMGIPDCDTMLMLLAASTEMDEHERLITTREIMKGFAERARLATTTVTGGQTVMNPWPLIGGVAMAVVSEAEMVRPTGLLCAGDILVLTKPLGCQVAVNLKQWLLRPSPLYEEAIAGHISPEEIEELYNMATDSMRRLNREGARLMRKHGAHGATDVTGFGILGHANNFGAAQAVGDAPRSLCLVLERLPMFKTAVAASKQMNDKYRLLEGYSAETSGGLLVAFPSTTAAAAFCAELTAVDGGCPSWIVGHVEDRATNAVDGVYARLKDGYEIVEV</sequence>
<organism evidence="11">
    <name type="scientific">Leishmania major</name>
    <dbReference type="NCBI Taxonomy" id="5664"/>
    <lineage>
        <taxon>Eukaryota</taxon>
        <taxon>Discoba</taxon>
        <taxon>Euglenozoa</taxon>
        <taxon>Kinetoplastea</taxon>
        <taxon>Metakinetoplastina</taxon>
        <taxon>Trypanosomatida</taxon>
        <taxon>Trypanosomatidae</taxon>
        <taxon>Leishmaniinae</taxon>
        <taxon>Leishmania</taxon>
    </lineage>
</organism>
<protein>
    <recommendedName>
        <fullName evidence="7">Selenide, water dikinase</fullName>
        <ecNumber evidence="5">2.7.9.3</ecNumber>
    </recommendedName>
    <alternativeName>
        <fullName evidence="6">LmselD</fullName>
    </alternativeName>
    <alternativeName>
        <fullName evidence="7">Selenophosphate synthetase 2</fullName>
    </alternativeName>
</protein>
<evidence type="ECO:0000250" key="1">
    <source>
        <dbReference type="UniProtKB" id="P16456"/>
    </source>
</evidence>
<evidence type="ECO:0000250" key="2">
    <source>
        <dbReference type="UniProtKB" id="P49903"/>
    </source>
</evidence>
<evidence type="ECO:0000256" key="3">
    <source>
        <dbReference type="SAM" id="MobiDB-lite"/>
    </source>
</evidence>
<evidence type="ECO:0000269" key="4">
    <source>
    </source>
</evidence>
<evidence type="ECO:0000269" key="5">
    <source>
    </source>
</evidence>
<evidence type="ECO:0000303" key="6">
    <source>
    </source>
</evidence>
<evidence type="ECO:0000305" key="7"/>
<evidence type="ECO:0000305" key="8">
    <source>
    </source>
</evidence>
<evidence type="ECO:0000312" key="9">
    <source>
        <dbReference type="EMBL" id="AAG35734.3"/>
    </source>
</evidence>
<evidence type="ECO:0000312" key="10">
    <source>
        <dbReference type="EMBL" id="CAJ09514.1"/>
    </source>
</evidence>
<evidence type="ECO:0000312" key="11">
    <source>
        <dbReference type="Proteomes" id="UP000000542"/>
    </source>
</evidence>
<evidence type="ECO:0007744" key="12">
    <source>
        <dbReference type="PDB" id="5L16"/>
    </source>
</evidence>
<evidence type="ECO:0007829" key="13">
    <source>
        <dbReference type="PDB" id="5L16"/>
    </source>
</evidence>
<gene>
    <name evidence="7" type="primary">SPS2</name>
    <name evidence="6" type="synonym">SelD</name>
    <name evidence="10" type="ORF">LMJF_36_5410</name>
</gene>
<dbReference type="EC" id="2.7.9.3" evidence="5"/>
<dbReference type="EMBL" id="AF208490">
    <property type="protein sequence ID" value="AAG35734.3"/>
    <property type="status" value="ALT_INIT"/>
    <property type="molecule type" value="mRNA"/>
</dbReference>
<dbReference type="EMBL" id="FR796432">
    <property type="protein sequence ID" value="CAJ09514.1"/>
    <property type="molecule type" value="Genomic_DNA"/>
</dbReference>
<dbReference type="RefSeq" id="XP_001687128.1">
    <property type="nucleotide sequence ID" value="XM_001687076.1"/>
</dbReference>
<dbReference type="PDB" id="5L16">
    <property type="method" value="X-ray"/>
    <property type="resolution" value="1.88 A"/>
    <property type="chains" value="A=1-398"/>
</dbReference>
<dbReference type="PDBsum" id="5L16"/>
<dbReference type="SMR" id="Q4Q0M0"/>
<dbReference type="STRING" id="5664.Q4Q0M0"/>
<dbReference type="EnsemblProtists" id="CAJ09514">
    <property type="protein sequence ID" value="CAJ09514"/>
    <property type="gene ID" value="LMJF_36_5410"/>
</dbReference>
<dbReference type="GeneID" id="5655844"/>
<dbReference type="KEGG" id="lma:LMJF_36_5410"/>
<dbReference type="VEuPathDB" id="TriTrypDB:LmjF.36.5410"/>
<dbReference type="VEuPathDB" id="TriTrypDB:LMJFC_360071300"/>
<dbReference type="VEuPathDB" id="TriTrypDB:LMJLV39_360066300"/>
<dbReference type="VEuPathDB" id="TriTrypDB:LMJSD75_360066200"/>
<dbReference type="eggNOG" id="KOG3939">
    <property type="taxonomic scope" value="Eukaryota"/>
</dbReference>
<dbReference type="HOGENOM" id="CLU_032859_1_0_1"/>
<dbReference type="InParanoid" id="Q4Q0M0"/>
<dbReference type="OMA" id="LARDWMC"/>
<dbReference type="BRENDA" id="2.7.9.3">
    <property type="organism ID" value="2950"/>
</dbReference>
<dbReference type="Proteomes" id="UP000000542">
    <property type="component" value="Chromosome 36"/>
</dbReference>
<dbReference type="GO" id="GO:0005737">
    <property type="term" value="C:cytoplasm"/>
    <property type="evidence" value="ECO:0000318"/>
    <property type="project" value="GO_Central"/>
</dbReference>
<dbReference type="GO" id="GO:0005524">
    <property type="term" value="F:ATP binding"/>
    <property type="evidence" value="ECO:0007669"/>
    <property type="project" value="UniProtKB-KW"/>
</dbReference>
<dbReference type="GO" id="GO:0046872">
    <property type="term" value="F:metal ion binding"/>
    <property type="evidence" value="ECO:0007669"/>
    <property type="project" value="UniProtKB-KW"/>
</dbReference>
<dbReference type="GO" id="GO:0004756">
    <property type="term" value="F:selenide, water dikinase activity"/>
    <property type="evidence" value="ECO:0000314"/>
    <property type="project" value="UniProtKB"/>
</dbReference>
<dbReference type="GO" id="GO:0016260">
    <property type="term" value="P:selenocysteine biosynthetic process"/>
    <property type="evidence" value="ECO:0000314"/>
    <property type="project" value="UniProtKB"/>
</dbReference>
<dbReference type="CDD" id="cd02195">
    <property type="entry name" value="SelD"/>
    <property type="match status" value="1"/>
</dbReference>
<dbReference type="FunFam" id="3.30.1330.10:FF:000023">
    <property type="entry name" value="Putative selenophosphate synthetase"/>
    <property type="match status" value="1"/>
</dbReference>
<dbReference type="FunFam" id="3.90.650.10:FF:000010">
    <property type="entry name" value="Selenide, water dikinase"/>
    <property type="match status" value="1"/>
</dbReference>
<dbReference type="Gene3D" id="3.90.650.10">
    <property type="entry name" value="PurM-like C-terminal domain"/>
    <property type="match status" value="1"/>
</dbReference>
<dbReference type="Gene3D" id="3.30.1330.10">
    <property type="entry name" value="PurM-like, N-terminal domain"/>
    <property type="match status" value="1"/>
</dbReference>
<dbReference type="InterPro" id="IPR010918">
    <property type="entry name" value="PurM-like_C_dom"/>
</dbReference>
<dbReference type="InterPro" id="IPR036676">
    <property type="entry name" value="PurM-like_C_sf"/>
</dbReference>
<dbReference type="InterPro" id="IPR016188">
    <property type="entry name" value="PurM-like_N"/>
</dbReference>
<dbReference type="InterPro" id="IPR036921">
    <property type="entry name" value="PurM-like_N_sf"/>
</dbReference>
<dbReference type="InterPro" id="IPR004536">
    <property type="entry name" value="SPS/SelD"/>
</dbReference>
<dbReference type="NCBIfam" id="TIGR00476">
    <property type="entry name" value="selD"/>
    <property type="match status" value="1"/>
</dbReference>
<dbReference type="PANTHER" id="PTHR10256:SF0">
    <property type="entry name" value="INACTIVE SELENIDE, WATER DIKINASE-LIKE PROTEIN-RELATED"/>
    <property type="match status" value="1"/>
</dbReference>
<dbReference type="PANTHER" id="PTHR10256">
    <property type="entry name" value="SELENIDE, WATER DIKINASE"/>
    <property type="match status" value="1"/>
</dbReference>
<dbReference type="Pfam" id="PF00586">
    <property type="entry name" value="AIRS"/>
    <property type="match status" value="1"/>
</dbReference>
<dbReference type="Pfam" id="PF02769">
    <property type="entry name" value="AIRS_C"/>
    <property type="match status" value="1"/>
</dbReference>
<dbReference type="PIRSF" id="PIRSF036407">
    <property type="entry name" value="Selenphspht_syn"/>
    <property type="match status" value="1"/>
</dbReference>
<dbReference type="SUPFAM" id="SSF56042">
    <property type="entry name" value="PurM C-terminal domain-like"/>
    <property type="match status" value="1"/>
</dbReference>
<dbReference type="SUPFAM" id="SSF55326">
    <property type="entry name" value="PurM N-terminal domain-like"/>
    <property type="match status" value="1"/>
</dbReference>